<evidence type="ECO:0000250" key="1">
    <source>
        <dbReference type="UniProtKB" id="O95219"/>
    </source>
</evidence>
<evidence type="ECO:0000250" key="2">
    <source>
        <dbReference type="UniProtKB" id="Q3UR97"/>
    </source>
</evidence>
<evidence type="ECO:0000250" key="3">
    <source>
        <dbReference type="UniProtKB" id="Q6P4T1"/>
    </source>
</evidence>
<evidence type="ECO:0000250" key="4">
    <source>
        <dbReference type="UniProtKB" id="Q96L94"/>
    </source>
</evidence>
<evidence type="ECO:0000255" key="5">
    <source>
        <dbReference type="PROSITE-ProRule" id="PRU00147"/>
    </source>
</evidence>
<evidence type="ECO:0000256" key="6">
    <source>
        <dbReference type="SAM" id="MobiDB-lite"/>
    </source>
</evidence>
<evidence type="ECO:0000305" key="7"/>
<protein>
    <recommendedName>
        <fullName evidence="1">Sorting nexin-4</fullName>
    </recommendedName>
</protein>
<organism>
    <name type="scientific">Pongo abelii</name>
    <name type="common">Sumatran orangutan</name>
    <name type="synonym">Pongo pygmaeus abelii</name>
    <dbReference type="NCBI Taxonomy" id="9601"/>
    <lineage>
        <taxon>Eukaryota</taxon>
        <taxon>Metazoa</taxon>
        <taxon>Chordata</taxon>
        <taxon>Craniata</taxon>
        <taxon>Vertebrata</taxon>
        <taxon>Euteleostomi</taxon>
        <taxon>Mammalia</taxon>
        <taxon>Eutheria</taxon>
        <taxon>Euarchontoglires</taxon>
        <taxon>Primates</taxon>
        <taxon>Haplorrhini</taxon>
        <taxon>Catarrhini</taxon>
        <taxon>Hominidae</taxon>
        <taxon>Pongo</taxon>
    </lineage>
</organism>
<reference key="1">
    <citation type="submission" date="2004-11" db="EMBL/GenBank/DDBJ databases">
        <authorList>
            <consortium name="The German cDNA consortium"/>
        </authorList>
    </citation>
    <scope>NUCLEOTIDE SEQUENCE [LARGE SCALE MRNA]</scope>
    <source>
        <tissue>Brain cortex</tissue>
    </source>
</reference>
<feature type="chain" id="PRO_0000213843" description="Sorting nexin-4">
    <location>
        <begin position="1"/>
        <end position="450"/>
    </location>
</feature>
<feature type="domain" description="PX" evidence="5">
    <location>
        <begin position="61"/>
        <end position="187"/>
    </location>
</feature>
<feature type="region of interest" description="Disordered" evidence="6">
    <location>
        <begin position="1"/>
        <end position="46"/>
    </location>
</feature>
<feature type="binding site" evidence="2">
    <location>
        <position position="106"/>
    </location>
    <ligand>
        <name>a 1,2-diacyl-sn-glycero-3-phospho-(1D-myo-inositol-3-phosphate)</name>
        <dbReference type="ChEBI" id="CHEBI:58088"/>
    </ligand>
</feature>
<feature type="binding site" evidence="4">
    <location>
        <position position="108"/>
    </location>
    <ligand>
        <name>a 1,2-diacyl-sn-glycero-3-phospho-(1D-myo-inositol-3-phosphate)</name>
        <dbReference type="ChEBI" id="CHEBI:58088"/>
    </ligand>
</feature>
<feature type="binding site" evidence="4">
    <location>
        <position position="132"/>
    </location>
    <ligand>
        <name>a 1,2-diacyl-sn-glycero-3-phospho-(1D-myo-inositol-3-phosphate)</name>
        <dbReference type="ChEBI" id="CHEBI:58088"/>
    </ligand>
</feature>
<feature type="binding site" evidence="3">
    <location>
        <position position="154"/>
    </location>
    <ligand>
        <name>a 1,2-diacyl-sn-glycero-3-phospho-(1D-myo-inositol-3-phosphate)</name>
        <dbReference type="ChEBI" id="CHEBI:58088"/>
    </ligand>
</feature>
<feature type="modified residue" description="N-acetylmethionine" evidence="1">
    <location>
        <position position="1"/>
    </location>
</feature>
<feature type="modified residue" description="Phosphoserine" evidence="1">
    <location>
        <position position="22"/>
    </location>
</feature>
<keyword id="KW-0007">Acetylation</keyword>
<keyword id="KW-0967">Endosome</keyword>
<keyword id="KW-0446">Lipid-binding</keyword>
<keyword id="KW-0472">Membrane</keyword>
<keyword id="KW-0597">Phosphoprotein</keyword>
<keyword id="KW-0653">Protein transport</keyword>
<keyword id="KW-1185">Reference proteome</keyword>
<keyword id="KW-0813">Transport</keyword>
<gene>
    <name evidence="1" type="primary">SNX4</name>
</gene>
<proteinExistence type="evidence at transcript level"/>
<dbReference type="EMBL" id="CR861330">
    <property type="protein sequence ID" value="CAH93394.1"/>
    <property type="molecule type" value="mRNA"/>
</dbReference>
<dbReference type="RefSeq" id="NP_001126992.1">
    <property type="nucleotide sequence ID" value="NM_001133520.1"/>
</dbReference>
<dbReference type="SMR" id="Q5R4C2"/>
<dbReference type="FunCoup" id="Q5R4C2">
    <property type="interactions" value="1471"/>
</dbReference>
<dbReference type="STRING" id="9601.ENSPPYP00000015056"/>
<dbReference type="GeneID" id="100174015"/>
<dbReference type="KEGG" id="pon:100174015"/>
<dbReference type="CTD" id="8723"/>
<dbReference type="eggNOG" id="KOG2273">
    <property type="taxonomic scope" value="Eukaryota"/>
</dbReference>
<dbReference type="HOGENOM" id="CLU_057138_0_0_1"/>
<dbReference type="InParanoid" id="Q5R4C2"/>
<dbReference type="OrthoDB" id="289314at2759"/>
<dbReference type="TreeFam" id="TF328543"/>
<dbReference type="Proteomes" id="UP000001595">
    <property type="component" value="Chromosome 3"/>
</dbReference>
<dbReference type="GO" id="GO:0005868">
    <property type="term" value="C:cytoplasmic dynein complex"/>
    <property type="evidence" value="ECO:0000250"/>
    <property type="project" value="UniProtKB"/>
</dbReference>
<dbReference type="GO" id="GO:0005769">
    <property type="term" value="C:early endosome"/>
    <property type="evidence" value="ECO:0000250"/>
    <property type="project" value="UniProtKB"/>
</dbReference>
<dbReference type="GO" id="GO:0031901">
    <property type="term" value="C:early endosome membrane"/>
    <property type="evidence" value="ECO:0000250"/>
    <property type="project" value="UniProtKB"/>
</dbReference>
<dbReference type="GO" id="GO:0005886">
    <property type="term" value="C:plasma membrane"/>
    <property type="evidence" value="ECO:0007669"/>
    <property type="project" value="TreeGrafter"/>
</dbReference>
<dbReference type="GO" id="GO:0031201">
    <property type="term" value="C:SNARE complex"/>
    <property type="evidence" value="ECO:0007669"/>
    <property type="project" value="TreeGrafter"/>
</dbReference>
<dbReference type="GO" id="GO:0035091">
    <property type="term" value="F:phosphatidylinositol binding"/>
    <property type="evidence" value="ECO:0000250"/>
    <property type="project" value="UniProtKB"/>
</dbReference>
<dbReference type="GO" id="GO:0032266">
    <property type="term" value="F:phosphatidylinositol-3-phosphate binding"/>
    <property type="evidence" value="ECO:0000250"/>
    <property type="project" value="UniProtKB"/>
</dbReference>
<dbReference type="GO" id="GO:0032456">
    <property type="term" value="P:endocytic recycling"/>
    <property type="evidence" value="ECO:0000250"/>
    <property type="project" value="UniProtKB"/>
</dbReference>
<dbReference type="GO" id="GO:2000786">
    <property type="term" value="P:positive regulation of autophagosome assembly"/>
    <property type="evidence" value="ECO:0000250"/>
    <property type="project" value="UniProtKB"/>
</dbReference>
<dbReference type="GO" id="GO:0015031">
    <property type="term" value="P:protein transport"/>
    <property type="evidence" value="ECO:0000250"/>
    <property type="project" value="UniProtKB"/>
</dbReference>
<dbReference type="CDD" id="cd07622">
    <property type="entry name" value="BAR_SNX4"/>
    <property type="match status" value="1"/>
</dbReference>
<dbReference type="CDD" id="cd06864">
    <property type="entry name" value="PX_SNX4"/>
    <property type="match status" value="1"/>
</dbReference>
<dbReference type="FunFam" id="1.20.1270.60:FF:000035">
    <property type="entry name" value="Sorting nexin 4"/>
    <property type="match status" value="1"/>
</dbReference>
<dbReference type="FunFam" id="3.30.1520.10:FF:000031">
    <property type="entry name" value="Sorting nexin 4"/>
    <property type="match status" value="1"/>
</dbReference>
<dbReference type="Gene3D" id="1.20.1270.60">
    <property type="entry name" value="Arfaptin homology (AH) domain/BAR domain"/>
    <property type="match status" value="1"/>
</dbReference>
<dbReference type="Gene3D" id="3.30.1520.10">
    <property type="entry name" value="Phox-like domain"/>
    <property type="match status" value="1"/>
</dbReference>
<dbReference type="InterPro" id="IPR027267">
    <property type="entry name" value="AH/BAR_dom_sf"/>
</dbReference>
<dbReference type="InterPro" id="IPR001683">
    <property type="entry name" value="PX_dom"/>
</dbReference>
<dbReference type="InterPro" id="IPR036871">
    <property type="entry name" value="PX_dom_sf"/>
</dbReference>
<dbReference type="InterPro" id="IPR034902">
    <property type="entry name" value="PX_SNX4"/>
</dbReference>
<dbReference type="InterPro" id="IPR034783">
    <property type="entry name" value="SNX4"/>
</dbReference>
<dbReference type="InterPro" id="IPR037430">
    <property type="entry name" value="SNX4_BAR"/>
</dbReference>
<dbReference type="PANTHER" id="PTHR46596">
    <property type="entry name" value="SORTING NEXIN-4"/>
    <property type="match status" value="1"/>
</dbReference>
<dbReference type="PANTHER" id="PTHR46596:SF1">
    <property type="entry name" value="SORTING NEXIN-4"/>
    <property type="match status" value="1"/>
</dbReference>
<dbReference type="Pfam" id="PF00787">
    <property type="entry name" value="PX"/>
    <property type="match status" value="1"/>
</dbReference>
<dbReference type="SMART" id="SM00312">
    <property type="entry name" value="PX"/>
    <property type="match status" value="1"/>
</dbReference>
<dbReference type="SUPFAM" id="SSF64268">
    <property type="entry name" value="PX domain"/>
    <property type="match status" value="1"/>
</dbReference>
<dbReference type="PROSITE" id="PS50195">
    <property type="entry name" value="PX"/>
    <property type="match status" value="1"/>
</dbReference>
<accession>Q5R4C2</accession>
<sequence>MEQAPPDPERQLQPAPLEPLGSPDAVLGAAVGKETEGAGEESSGVDTMTHNNFWLKKIEISVSEAEKRTGRNAMNMQETYTAYLIETRSIEHTDGQSVLTDSLWRRYSEFELLRSYLLVYYPHIVVPPLPEKRAEFVWHKLSADNMDPDFVERRRIGLENFLLRIASHPLLCRDKIFYLFLTQEGNWKETVNETGFQLKADSRLKALNATFRVKNPDKRFTDLKHYSDELQSVISHLLRVRARVADRLYGVYKVHGNYGRVFSEWSAIEKEMGDGLQSAGHHMDVYASSIDDILEDEEHYADQLKEYLFYAEALRAVCRKHELMQYDLEMAAQDLASKKQQCEELATGTVRTFSLKGMTTKLFGQETPEQREARIKVLEEQINEGEQQLKSKNLEGREFVKNAWADIERFKEQKNRDLKEALISYAVMQISMCKKGIQVWTNAKECFSKM</sequence>
<name>SNX4_PONAB</name>
<comment type="function">
    <text evidence="1">Involved in the regulation of endocytosis and in several stages of intracellular trafficking. Plays a role in recycling endocytosed transferrin receptor and prevent its degradation. Involved in autophagosome assembly by regulating trafficking and recycling of phospholipid scramblase ATG9A.</text>
</comment>
<comment type="subunit">
    <text evidence="1">Heterodimer; heterodimerizes with SNX7 or SNX30. Interacts with WWC1/KIBRA. Identified in a complex with WWC1/KIBRA and dynein components DYNLL1 and DYNC1I2. Interacts with BIN1.</text>
</comment>
<comment type="subcellular location">
    <subcellularLocation>
        <location evidence="1">Early endosome</location>
    </subcellularLocation>
    <subcellularLocation>
        <location evidence="1">Early endosome membrane</location>
        <topology evidence="1">Peripheral membrane protein</topology>
        <orientation evidence="1">Cytoplasmic side</orientation>
    </subcellularLocation>
    <text evidence="1">Also detected on a juxtanuclear endocytic recycling compartment (ERC).</text>
</comment>
<comment type="domain">
    <text evidence="4">The PX domain binds phosphatidylinositol 3-phosphate which is necessary for peripheral membrane localization.</text>
</comment>
<comment type="similarity">
    <text evidence="7">Belongs to the sorting nexin family.</text>
</comment>